<comment type="function">
    <text evidence="1">Regulates export of the secretory proteins from the endoplasmic reticulum in COPII-coated vesicles.</text>
</comment>
<comment type="subcellular location">
    <subcellularLocation>
        <location evidence="3">Endoplasmic reticulum</location>
    </subcellularLocation>
    <subcellularLocation>
        <location evidence="4">Membrane</location>
        <topology evidence="4">Multi-pass membrane protein</topology>
    </subcellularLocation>
    <subcellularLocation>
        <location evidence="1">Golgi apparatus membrane</location>
        <topology evidence="1">Multi-pass membrane protein</topology>
    </subcellularLocation>
    <text evidence="1 3">Resides in the endoplasmic and Golgi compartments, and then packaged into endoplasmic reticulum derived vesicles.</text>
</comment>
<comment type="similarity">
    <text evidence="2">Belongs to the cornichon family.</text>
</comment>
<evidence type="ECO:0000250" key="1">
    <source>
        <dbReference type="UniProtKB" id="P53173"/>
    </source>
</evidence>
<evidence type="ECO:0000255" key="2"/>
<evidence type="ECO:0000269" key="3">
    <source>
    </source>
</evidence>
<evidence type="ECO:0000305" key="4"/>
<organism>
    <name type="scientific">Schizosaccharomyces pombe (strain 972 / ATCC 24843)</name>
    <name type="common">Fission yeast</name>
    <dbReference type="NCBI Taxonomy" id="284812"/>
    <lineage>
        <taxon>Eukaryota</taxon>
        <taxon>Fungi</taxon>
        <taxon>Dikarya</taxon>
        <taxon>Ascomycota</taxon>
        <taxon>Taphrinomycotina</taxon>
        <taxon>Schizosaccharomycetes</taxon>
        <taxon>Schizosaccharomycetales</taxon>
        <taxon>Schizosaccharomycetaceae</taxon>
        <taxon>Schizosaccharomyces</taxon>
    </lineage>
</organism>
<keyword id="KW-0256">Endoplasmic reticulum</keyword>
<keyword id="KW-0333">Golgi apparatus</keyword>
<keyword id="KW-0472">Membrane</keyword>
<keyword id="KW-1185">Reference proteome</keyword>
<keyword id="KW-0812">Transmembrane</keyword>
<keyword id="KW-1133">Transmembrane helix</keyword>
<sequence>MMSFGSFVYIACLLLNGANMLLQIFCVIMFSDLEMDYINPIDLCNKLNDLVMPEIISHTLVTLLLLLGKKWLLFLANLPLLVFHANQVIHKTHILDATEIFRQLGRHKRDNFIKVTFYLIMFFTLLYCMVMSLIQEE</sequence>
<proteinExistence type="inferred from homology"/>
<gene>
    <name type="primary">erv14</name>
    <name type="ORF">SPAC30C2.05</name>
</gene>
<accession>Q9P6K6</accession>
<feature type="chain" id="PRO_0000315909" description="ER-derived vesicles protein erv14">
    <location>
        <begin position="1"/>
        <end position="137"/>
    </location>
</feature>
<feature type="topological domain" description="Cytoplasmic" evidence="2">
    <location>
        <begin position="1"/>
        <end position="9"/>
    </location>
</feature>
<feature type="transmembrane region" description="Helical" evidence="2">
    <location>
        <begin position="10"/>
        <end position="30"/>
    </location>
</feature>
<feature type="topological domain" description="Extracellular" evidence="2">
    <location>
        <begin position="31"/>
        <end position="62"/>
    </location>
</feature>
<feature type="transmembrane region" description="Helical" evidence="2">
    <location>
        <begin position="63"/>
        <end position="83"/>
    </location>
</feature>
<feature type="topological domain" description="Cytoplasmic" evidence="2">
    <location>
        <begin position="84"/>
        <end position="114"/>
    </location>
</feature>
<feature type="transmembrane region" description="Helical" evidence="2">
    <location>
        <begin position="115"/>
        <end position="135"/>
    </location>
</feature>
<feature type="topological domain" description="Extracellular" evidence="2">
    <location>
        <begin position="136"/>
        <end position="137"/>
    </location>
</feature>
<dbReference type="EMBL" id="CU329670">
    <property type="protein sequence ID" value="CAB90792.2"/>
    <property type="molecule type" value="Genomic_DNA"/>
</dbReference>
<dbReference type="RefSeq" id="NP_594657.2">
    <property type="nucleotide sequence ID" value="NM_001020086.3"/>
</dbReference>
<dbReference type="SMR" id="Q9P6K6"/>
<dbReference type="BioGRID" id="279514">
    <property type="interactions" value="3"/>
</dbReference>
<dbReference type="FunCoup" id="Q9P6K6">
    <property type="interactions" value="558"/>
</dbReference>
<dbReference type="STRING" id="284812.Q9P6K6"/>
<dbReference type="PaxDb" id="4896-SPAC30C2.05.1"/>
<dbReference type="EnsemblFungi" id="SPAC30C2.05.1">
    <property type="protein sequence ID" value="SPAC30C2.05.1:pep"/>
    <property type="gene ID" value="SPAC30C2.05"/>
</dbReference>
<dbReference type="GeneID" id="2543081"/>
<dbReference type="KEGG" id="spo:2543081"/>
<dbReference type="PomBase" id="SPAC30C2.05">
    <property type="gene designation" value="erv14"/>
</dbReference>
<dbReference type="VEuPathDB" id="FungiDB:SPAC30C2.05"/>
<dbReference type="eggNOG" id="KOG2729">
    <property type="taxonomic scope" value="Eukaryota"/>
</dbReference>
<dbReference type="HOGENOM" id="CLU_112942_0_0_1"/>
<dbReference type="InParanoid" id="Q9P6K6"/>
<dbReference type="OMA" id="HKKECFI"/>
<dbReference type="PhylomeDB" id="Q9P6K6"/>
<dbReference type="PRO" id="PR:Q9P6K6"/>
<dbReference type="Proteomes" id="UP000002485">
    <property type="component" value="Chromosome I"/>
</dbReference>
<dbReference type="GO" id="GO:0030134">
    <property type="term" value="C:COPII-coated ER to Golgi transport vesicle"/>
    <property type="evidence" value="ECO:0000318"/>
    <property type="project" value="GO_Central"/>
</dbReference>
<dbReference type="GO" id="GO:0005783">
    <property type="term" value="C:endoplasmic reticulum"/>
    <property type="evidence" value="ECO:0007005"/>
    <property type="project" value="PomBase"/>
</dbReference>
<dbReference type="GO" id="GO:0005789">
    <property type="term" value="C:endoplasmic reticulum membrane"/>
    <property type="evidence" value="ECO:0000318"/>
    <property type="project" value="GO_Central"/>
</dbReference>
<dbReference type="GO" id="GO:0000139">
    <property type="term" value="C:Golgi membrane"/>
    <property type="evidence" value="ECO:0007669"/>
    <property type="project" value="UniProtKB-SubCell"/>
</dbReference>
<dbReference type="GO" id="GO:0005102">
    <property type="term" value="F:signaling receptor binding"/>
    <property type="evidence" value="ECO:0000318"/>
    <property type="project" value="GO_Central"/>
</dbReference>
<dbReference type="GO" id="GO:0006888">
    <property type="term" value="P:endoplasmic reticulum to Golgi vesicle-mediated transport"/>
    <property type="evidence" value="ECO:0000318"/>
    <property type="project" value="GO_Central"/>
</dbReference>
<dbReference type="GO" id="GO:0006886">
    <property type="term" value="P:intracellular protein transport"/>
    <property type="evidence" value="ECO:0000305"/>
    <property type="project" value="PomBase"/>
</dbReference>
<dbReference type="InterPro" id="IPR003377">
    <property type="entry name" value="Cornichon"/>
</dbReference>
<dbReference type="InterPro" id="IPR033466">
    <property type="entry name" value="Cornichon_conserved"/>
</dbReference>
<dbReference type="PANTHER" id="PTHR12290">
    <property type="entry name" value="CORNICHON-RELATED"/>
    <property type="match status" value="1"/>
</dbReference>
<dbReference type="Pfam" id="PF03311">
    <property type="entry name" value="Cornichon"/>
    <property type="match status" value="1"/>
</dbReference>
<dbReference type="SMART" id="SM01398">
    <property type="entry name" value="Cornichon"/>
    <property type="match status" value="1"/>
</dbReference>
<dbReference type="PROSITE" id="PS01340">
    <property type="entry name" value="CORNICHON"/>
    <property type="match status" value="1"/>
</dbReference>
<reference key="1">
    <citation type="journal article" date="2002" name="Nature">
        <title>The genome sequence of Schizosaccharomyces pombe.</title>
        <authorList>
            <person name="Wood V."/>
            <person name="Gwilliam R."/>
            <person name="Rajandream M.A."/>
            <person name="Lyne M.H."/>
            <person name="Lyne R."/>
            <person name="Stewart A."/>
            <person name="Sgouros J.G."/>
            <person name="Peat N."/>
            <person name="Hayles J."/>
            <person name="Baker S.G."/>
            <person name="Basham D."/>
            <person name="Bowman S."/>
            <person name="Brooks K."/>
            <person name="Brown D."/>
            <person name="Brown S."/>
            <person name="Chillingworth T."/>
            <person name="Churcher C.M."/>
            <person name="Collins M."/>
            <person name="Connor R."/>
            <person name="Cronin A."/>
            <person name="Davis P."/>
            <person name="Feltwell T."/>
            <person name="Fraser A."/>
            <person name="Gentles S."/>
            <person name="Goble A."/>
            <person name="Hamlin N."/>
            <person name="Harris D.E."/>
            <person name="Hidalgo J."/>
            <person name="Hodgson G."/>
            <person name="Holroyd S."/>
            <person name="Hornsby T."/>
            <person name="Howarth S."/>
            <person name="Huckle E.J."/>
            <person name="Hunt S."/>
            <person name="Jagels K."/>
            <person name="James K.D."/>
            <person name="Jones L."/>
            <person name="Jones M."/>
            <person name="Leather S."/>
            <person name="McDonald S."/>
            <person name="McLean J."/>
            <person name="Mooney P."/>
            <person name="Moule S."/>
            <person name="Mungall K.L."/>
            <person name="Murphy L.D."/>
            <person name="Niblett D."/>
            <person name="Odell C."/>
            <person name="Oliver K."/>
            <person name="O'Neil S."/>
            <person name="Pearson D."/>
            <person name="Quail M.A."/>
            <person name="Rabbinowitsch E."/>
            <person name="Rutherford K.M."/>
            <person name="Rutter S."/>
            <person name="Saunders D."/>
            <person name="Seeger K."/>
            <person name="Sharp S."/>
            <person name="Skelton J."/>
            <person name="Simmonds M.N."/>
            <person name="Squares R."/>
            <person name="Squares S."/>
            <person name="Stevens K."/>
            <person name="Taylor K."/>
            <person name="Taylor R.G."/>
            <person name="Tivey A."/>
            <person name="Walsh S.V."/>
            <person name="Warren T."/>
            <person name="Whitehead S."/>
            <person name="Woodward J.R."/>
            <person name="Volckaert G."/>
            <person name="Aert R."/>
            <person name="Robben J."/>
            <person name="Grymonprez B."/>
            <person name="Weltjens I."/>
            <person name="Vanstreels E."/>
            <person name="Rieger M."/>
            <person name="Schaefer M."/>
            <person name="Mueller-Auer S."/>
            <person name="Gabel C."/>
            <person name="Fuchs M."/>
            <person name="Duesterhoeft A."/>
            <person name="Fritzc C."/>
            <person name="Holzer E."/>
            <person name="Moestl D."/>
            <person name="Hilbert H."/>
            <person name="Borzym K."/>
            <person name="Langer I."/>
            <person name="Beck A."/>
            <person name="Lehrach H."/>
            <person name="Reinhardt R."/>
            <person name="Pohl T.M."/>
            <person name="Eger P."/>
            <person name="Zimmermann W."/>
            <person name="Wedler H."/>
            <person name="Wambutt R."/>
            <person name="Purnelle B."/>
            <person name="Goffeau A."/>
            <person name="Cadieu E."/>
            <person name="Dreano S."/>
            <person name="Gloux S."/>
            <person name="Lelaure V."/>
            <person name="Mottier S."/>
            <person name="Galibert F."/>
            <person name="Aves S.J."/>
            <person name="Xiang Z."/>
            <person name="Hunt C."/>
            <person name="Moore K."/>
            <person name="Hurst S.M."/>
            <person name="Lucas M."/>
            <person name="Rochet M."/>
            <person name="Gaillardin C."/>
            <person name="Tallada V.A."/>
            <person name="Garzon A."/>
            <person name="Thode G."/>
            <person name="Daga R.R."/>
            <person name="Cruzado L."/>
            <person name="Jimenez J."/>
            <person name="Sanchez M."/>
            <person name="del Rey F."/>
            <person name="Benito J."/>
            <person name="Dominguez A."/>
            <person name="Revuelta J.L."/>
            <person name="Moreno S."/>
            <person name="Armstrong J."/>
            <person name="Forsburg S.L."/>
            <person name="Cerutti L."/>
            <person name="Lowe T."/>
            <person name="McCombie W.R."/>
            <person name="Paulsen I."/>
            <person name="Potashkin J."/>
            <person name="Shpakovski G.V."/>
            <person name="Ussery D."/>
            <person name="Barrell B.G."/>
            <person name="Nurse P."/>
        </authorList>
    </citation>
    <scope>NUCLEOTIDE SEQUENCE [LARGE SCALE GENOMIC DNA]</scope>
    <source>
        <strain>972 / ATCC 24843</strain>
    </source>
</reference>
<reference evidence="4" key="2">
    <citation type="journal article" date="2006" name="Nat. Biotechnol.">
        <title>ORFeome cloning and global analysis of protein localization in the fission yeast Schizosaccharomyces pombe.</title>
        <authorList>
            <person name="Matsuyama A."/>
            <person name="Arai R."/>
            <person name="Yashiroda Y."/>
            <person name="Shirai A."/>
            <person name="Kamata A."/>
            <person name="Sekido S."/>
            <person name="Kobayashi Y."/>
            <person name="Hashimoto A."/>
            <person name="Hamamoto M."/>
            <person name="Hiraoka Y."/>
            <person name="Horinouchi S."/>
            <person name="Yoshida M."/>
        </authorList>
    </citation>
    <scope>SUBCELLULAR LOCATION [LARGE SCALE ANALYSIS]</scope>
</reference>
<protein>
    <recommendedName>
        <fullName>ER-derived vesicles protein erv14</fullName>
    </recommendedName>
</protein>
<name>ERV14_SCHPO</name>